<comment type="function">
    <text evidence="3">Putative taste receptor which may play a role in the perception of bitterness.</text>
</comment>
<comment type="subcellular location">
    <subcellularLocation>
        <location evidence="3">Membrane</location>
        <topology evidence="3">Multi-pass membrane protein</topology>
    </subcellularLocation>
</comment>
<comment type="miscellaneous">
    <text evidence="3">Several bitter taste receptors are expressed in a single taste receptor cell.</text>
</comment>
<comment type="similarity">
    <text evidence="2">Belongs to the G-protein coupled receptor T2R family.</text>
</comment>
<dbReference type="EMBL" id="AY362747">
    <property type="protein sequence ID" value="AAR13356.1"/>
    <property type="molecule type" value="Genomic_DNA"/>
</dbReference>
<dbReference type="RefSeq" id="NP_001020232.1">
    <property type="nucleotide sequence ID" value="NM_001025061.1"/>
</dbReference>
<dbReference type="RefSeq" id="XP_008761149.1">
    <property type="nucleotide sequence ID" value="XM_008762927.2"/>
</dbReference>
<dbReference type="RefSeq" id="XP_008773926.1">
    <property type="nucleotide sequence ID" value="XM_008775704.2"/>
</dbReference>
<dbReference type="SMR" id="Q67ES3"/>
<dbReference type="FunCoup" id="Q67ES3">
    <property type="interactions" value="80"/>
</dbReference>
<dbReference type="STRING" id="10116.ENSRNOP00000036134"/>
<dbReference type="GlyCosmos" id="Q67ES3">
    <property type="glycosylation" value="1 site, No reported glycans"/>
</dbReference>
<dbReference type="GlyGen" id="Q67ES3">
    <property type="glycosylation" value="1 site"/>
</dbReference>
<dbReference type="PaxDb" id="10116-ENSRNOP00000036134"/>
<dbReference type="Ensembl" id="ENSRNOT00000085902.2">
    <property type="protein sequence ID" value="ENSRNOP00000073280.1"/>
    <property type="gene ID" value="ENSRNOG00000053213.2"/>
</dbReference>
<dbReference type="GeneID" id="502756"/>
<dbReference type="KEGG" id="rno:502756"/>
<dbReference type="UCSC" id="RGD:1566290">
    <property type="organism name" value="rat"/>
</dbReference>
<dbReference type="AGR" id="RGD:1566290"/>
<dbReference type="CTD" id="387514"/>
<dbReference type="RGD" id="1566290">
    <property type="gene designation" value="Tas2r143"/>
</dbReference>
<dbReference type="eggNOG" id="ENOG502S2SI">
    <property type="taxonomic scope" value="Eukaryota"/>
</dbReference>
<dbReference type="GeneTree" id="ENSGT01100000263477"/>
<dbReference type="HOGENOM" id="CLU_072337_1_1_1"/>
<dbReference type="InParanoid" id="Q67ES3"/>
<dbReference type="OMA" id="KWRISQL"/>
<dbReference type="OrthoDB" id="8876749at2759"/>
<dbReference type="PhylomeDB" id="Q67ES3"/>
<dbReference type="TreeFam" id="TF335891"/>
<dbReference type="PRO" id="PR:Q67ES3"/>
<dbReference type="Proteomes" id="UP000002494">
    <property type="component" value="Chromosome 4"/>
</dbReference>
<dbReference type="GO" id="GO:0016020">
    <property type="term" value="C:membrane"/>
    <property type="evidence" value="ECO:0000318"/>
    <property type="project" value="GO_Central"/>
</dbReference>
<dbReference type="GO" id="GO:0033038">
    <property type="term" value="F:bitter taste receptor activity"/>
    <property type="evidence" value="ECO:0000318"/>
    <property type="project" value="GO_Central"/>
</dbReference>
<dbReference type="GO" id="GO:0004930">
    <property type="term" value="F:G protein-coupled receptor activity"/>
    <property type="evidence" value="ECO:0007669"/>
    <property type="project" value="UniProtKB-KW"/>
</dbReference>
<dbReference type="GO" id="GO:0001580">
    <property type="term" value="P:detection of chemical stimulus involved in sensory perception of bitter taste"/>
    <property type="evidence" value="ECO:0000318"/>
    <property type="project" value="GO_Central"/>
</dbReference>
<dbReference type="CDD" id="cd15017">
    <property type="entry name" value="7tm_TAS2R16"/>
    <property type="match status" value="1"/>
</dbReference>
<dbReference type="FunFam" id="1.20.1070.10:FF:000055">
    <property type="entry name" value="Taste receptor type 2"/>
    <property type="match status" value="1"/>
</dbReference>
<dbReference type="Gene3D" id="1.20.1070.10">
    <property type="entry name" value="Rhodopsin 7-helix transmembrane proteins"/>
    <property type="match status" value="1"/>
</dbReference>
<dbReference type="InterPro" id="IPR007960">
    <property type="entry name" value="TAS2R"/>
</dbReference>
<dbReference type="PANTHER" id="PTHR11394">
    <property type="entry name" value="TASTE RECEPTOR TYPE 2"/>
    <property type="match status" value="1"/>
</dbReference>
<dbReference type="PANTHER" id="PTHR11394:SF71">
    <property type="entry name" value="TASTE RECEPTOR TYPE 2 MEMBER 143"/>
    <property type="match status" value="1"/>
</dbReference>
<dbReference type="Pfam" id="PF05296">
    <property type="entry name" value="TAS2R"/>
    <property type="match status" value="1"/>
</dbReference>
<dbReference type="SUPFAM" id="SSF81321">
    <property type="entry name" value="Family A G protein-coupled receptor-like"/>
    <property type="match status" value="1"/>
</dbReference>
<evidence type="ECO:0000250" key="1">
    <source>
        <dbReference type="UniProtKB" id="Q7TQB9"/>
    </source>
</evidence>
<evidence type="ECO:0000255" key="2"/>
<evidence type="ECO:0000305" key="3"/>
<evidence type="ECO:0000312" key="4">
    <source>
        <dbReference type="EMBL" id="AAR13356.1"/>
    </source>
</evidence>
<name>TR143_RAT</name>
<organism>
    <name type="scientific">Rattus norvegicus</name>
    <name type="common">Rat</name>
    <dbReference type="NCBI Taxonomy" id="10116"/>
    <lineage>
        <taxon>Eukaryota</taxon>
        <taxon>Metazoa</taxon>
        <taxon>Chordata</taxon>
        <taxon>Craniata</taxon>
        <taxon>Vertebrata</taxon>
        <taxon>Euteleostomi</taxon>
        <taxon>Mammalia</taxon>
        <taxon>Eutheria</taxon>
        <taxon>Euarchontoglires</taxon>
        <taxon>Glires</taxon>
        <taxon>Rodentia</taxon>
        <taxon>Myomorpha</taxon>
        <taxon>Muroidea</taxon>
        <taxon>Muridae</taxon>
        <taxon>Murinae</taxon>
        <taxon>Rattus</taxon>
    </lineage>
</organism>
<keyword id="KW-0297">G-protein coupled receptor</keyword>
<keyword id="KW-0325">Glycoprotein</keyword>
<keyword id="KW-0472">Membrane</keyword>
<keyword id="KW-0675">Receptor</keyword>
<keyword id="KW-1185">Reference proteome</keyword>
<keyword id="KW-0716">Sensory transduction</keyword>
<keyword id="KW-0919">Taste</keyword>
<keyword id="KW-0807">Transducer</keyword>
<keyword id="KW-0812">Transmembrane</keyword>
<keyword id="KW-1133">Transmembrane helix</keyword>
<feature type="chain" id="PRO_0000247665" description="Taste receptor type 2 member 143">
    <location>
        <begin position="1"/>
        <end position="294"/>
    </location>
</feature>
<feature type="topological domain" description="Extracellular" evidence="2">
    <location>
        <begin position="1"/>
        <end position="7"/>
    </location>
</feature>
<feature type="transmembrane region" description="Helical; Name=1" evidence="2">
    <location>
        <begin position="8"/>
        <end position="28"/>
    </location>
</feature>
<feature type="topological domain" description="Cytoplasmic" evidence="2">
    <location>
        <begin position="29"/>
        <end position="43"/>
    </location>
</feature>
<feature type="transmembrane region" description="Helical; Name=2" evidence="2">
    <location>
        <begin position="44"/>
        <end position="64"/>
    </location>
</feature>
<feature type="topological domain" description="Extracellular" evidence="2">
    <location>
        <begin position="65"/>
        <end position="80"/>
    </location>
</feature>
<feature type="transmembrane region" description="Helical; Name=3" evidence="2">
    <location>
        <begin position="81"/>
        <end position="101"/>
    </location>
</feature>
<feature type="topological domain" description="Cytoplasmic" evidence="2">
    <location>
        <begin position="102"/>
        <end position="128"/>
    </location>
</feature>
<feature type="transmembrane region" description="Helical; Name=4" evidence="2">
    <location>
        <begin position="129"/>
        <end position="149"/>
    </location>
</feature>
<feature type="topological domain" description="Extracellular" evidence="2">
    <location>
        <begin position="150"/>
        <end position="180"/>
    </location>
</feature>
<feature type="transmembrane region" description="Helical; Name=5" evidence="2">
    <location>
        <begin position="181"/>
        <end position="201"/>
    </location>
</feature>
<feature type="topological domain" description="Cytoplasmic" evidence="2">
    <location>
        <begin position="202"/>
        <end position="227"/>
    </location>
</feature>
<feature type="transmembrane region" description="Helical; Name=6" evidence="2">
    <location>
        <begin position="228"/>
        <end position="248"/>
    </location>
</feature>
<feature type="topological domain" description="Extracellular" evidence="2">
    <location>
        <begin position="249"/>
        <end position="260"/>
    </location>
</feature>
<feature type="transmembrane region" description="Helical; Name=7" evidence="2">
    <location>
        <begin position="261"/>
        <end position="281"/>
    </location>
</feature>
<feature type="topological domain" description="Cytoplasmic" evidence="2">
    <location>
        <begin position="282"/>
        <end position="294"/>
    </location>
</feature>
<feature type="glycosylation site" description="N-linked (GlcNAc...) asparagine" evidence="2">
    <location>
        <position position="162"/>
    </location>
</feature>
<accession>Q67ES3</accession>
<protein>
    <recommendedName>
        <fullName>Taste receptor type 2 member 143</fullName>
        <shortName>T2R143</shortName>
    </recommendedName>
    <alternativeName>
        <fullName>Taste receptor type 2 member 27</fullName>
        <shortName>T2R27</shortName>
    </alternativeName>
</protein>
<reference evidence="4" key="1">
    <citation type="submission" date="2003-08" db="EMBL/GenBank/DDBJ databases">
        <title>Identification of new putative rat taste receptors belonging to the T2R family.</title>
        <authorList>
            <person name="Conte C."/>
            <person name="Ebeling M."/>
            <person name="Marcuz A."/>
            <person name="Andres-Barquin P.J."/>
        </authorList>
    </citation>
    <scope>NUCLEOTIDE SEQUENCE [GENOMIC DNA]</scope>
    <source>
        <strain evidence="4">Sprague-Dawley</strain>
    </source>
</reference>
<proteinExistence type="inferred from homology"/>
<sequence length="294" mass="34111">MPSTPTLIFIVIFFLVSVASMLQNGFMIIVLGREWMRNRALPAVDMIVASLASSRFCLHGIAILNNFLASFDFCYQANFVGILWDFINTLILWLTAWLAIFYCVKISSFSHPVLFWLKWRISQLVPRLLLVSLIMGGLSAIISATGNIIANQMIISQGFHGNCTFGHMSLDFYRYYYLSHAVLMWFTPFFLFLVSIIFLMFSLYRHVEKMRGHRPGPWDPRTQAHTMALKSLTVFITFYILFFLALIISSTKSKTMHSYWYWVREIIIYTGIFLNSIILVLSNPKLRKALKMRF</sequence>
<gene>
    <name evidence="1" type="primary">Tas2r143</name>
    <name type="synonym">Tas2r27</name>
</gene>